<dbReference type="EMBL" id="CP000806">
    <property type="protein sequence ID" value="ACB49568.1"/>
    <property type="molecule type" value="Genomic_DNA"/>
</dbReference>
<dbReference type="RefSeq" id="WP_009546714.1">
    <property type="nucleotide sequence ID" value="NC_010546.1"/>
</dbReference>
<dbReference type="SMR" id="B1X067"/>
<dbReference type="STRING" id="43989.cce_0217"/>
<dbReference type="KEGG" id="cyt:cce_0217"/>
<dbReference type="eggNOG" id="COG0522">
    <property type="taxonomic scope" value="Bacteria"/>
</dbReference>
<dbReference type="HOGENOM" id="CLU_092403_0_5_3"/>
<dbReference type="OrthoDB" id="9803672at2"/>
<dbReference type="Proteomes" id="UP000001203">
    <property type="component" value="Chromosome circular"/>
</dbReference>
<dbReference type="GO" id="GO:0015935">
    <property type="term" value="C:small ribosomal subunit"/>
    <property type="evidence" value="ECO:0007669"/>
    <property type="project" value="InterPro"/>
</dbReference>
<dbReference type="GO" id="GO:0019843">
    <property type="term" value="F:rRNA binding"/>
    <property type="evidence" value="ECO:0007669"/>
    <property type="project" value="UniProtKB-UniRule"/>
</dbReference>
<dbReference type="GO" id="GO:0003735">
    <property type="term" value="F:structural constituent of ribosome"/>
    <property type="evidence" value="ECO:0007669"/>
    <property type="project" value="InterPro"/>
</dbReference>
<dbReference type="GO" id="GO:0042274">
    <property type="term" value="P:ribosomal small subunit biogenesis"/>
    <property type="evidence" value="ECO:0007669"/>
    <property type="project" value="TreeGrafter"/>
</dbReference>
<dbReference type="GO" id="GO:0006412">
    <property type="term" value="P:translation"/>
    <property type="evidence" value="ECO:0007669"/>
    <property type="project" value="UniProtKB-UniRule"/>
</dbReference>
<dbReference type="CDD" id="cd00165">
    <property type="entry name" value="S4"/>
    <property type="match status" value="1"/>
</dbReference>
<dbReference type="FunFam" id="3.10.290.10:FF:000001">
    <property type="entry name" value="30S ribosomal protein S4"/>
    <property type="match status" value="1"/>
</dbReference>
<dbReference type="FunFam" id="1.10.1050.10:FF:000002">
    <property type="entry name" value="30S ribosomal protein S4, chloroplastic"/>
    <property type="match status" value="1"/>
</dbReference>
<dbReference type="Gene3D" id="1.10.1050.10">
    <property type="entry name" value="Ribosomal Protein S4 Delta 41, Chain A, domain 1"/>
    <property type="match status" value="1"/>
</dbReference>
<dbReference type="Gene3D" id="3.10.290.10">
    <property type="entry name" value="RNA-binding S4 domain"/>
    <property type="match status" value="1"/>
</dbReference>
<dbReference type="HAMAP" id="MF_01306_B">
    <property type="entry name" value="Ribosomal_uS4_B"/>
    <property type="match status" value="1"/>
</dbReference>
<dbReference type="InterPro" id="IPR022801">
    <property type="entry name" value="Ribosomal_uS4"/>
</dbReference>
<dbReference type="InterPro" id="IPR005709">
    <property type="entry name" value="Ribosomal_uS4_bac-type"/>
</dbReference>
<dbReference type="InterPro" id="IPR018079">
    <property type="entry name" value="Ribosomal_uS4_CS"/>
</dbReference>
<dbReference type="InterPro" id="IPR001912">
    <property type="entry name" value="Ribosomal_uS4_N"/>
</dbReference>
<dbReference type="InterPro" id="IPR002942">
    <property type="entry name" value="S4_RNA-bd"/>
</dbReference>
<dbReference type="InterPro" id="IPR036986">
    <property type="entry name" value="S4_RNA-bd_sf"/>
</dbReference>
<dbReference type="NCBIfam" id="NF003717">
    <property type="entry name" value="PRK05327.1"/>
    <property type="match status" value="1"/>
</dbReference>
<dbReference type="NCBIfam" id="TIGR01017">
    <property type="entry name" value="rpsD_bact"/>
    <property type="match status" value="1"/>
</dbReference>
<dbReference type="PANTHER" id="PTHR11831">
    <property type="entry name" value="30S 40S RIBOSOMAL PROTEIN"/>
    <property type="match status" value="1"/>
</dbReference>
<dbReference type="PANTHER" id="PTHR11831:SF4">
    <property type="entry name" value="SMALL RIBOSOMAL SUBUNIT PROTEIN US4M"/>
    <property type="match status" value="1"/>
</dbReference>
<dbReference type="Pfam" id="PF00163">
    <property type="entry name" value="Ribosomal_S4"/>
    <property type="match status" value="1"/>
</dbReference>
<dbReference type="Pfam" id="PF01479">
    <property type="entry name" value="S4"/>
    <property type="match status" value="1"/>
</dbReference>
<dbReference type="SMART" id="SM01390">
    <property type="entry name" value="Ribosomal_S4"/>
    <property type="match status" value="1"/>
</dbReference>
<dbReference type="SMART" id="SM00363">
    <property type="entry name" value="S4"/>
    <property type="match status" value="1"/>
</dbReference>
<dbReference type="SUPFAM" id="SSF55174">
    <property type="entry name" value="Alpha-L RNA-binding motif"/>
    <property type="match status" value="1"/>
</dbReference>
<dbReference type="PROSITE" id="PS00632">
    <property type="entry name" value="RIBOSOMAL_S4"/>
    <property type="match status" value="1"/>
</dbReference>
<dbReference type="PROSITE" id="PS50889">
    <property type="entry name" value="S4"/>
    <property type="match status" value="1"/>
</dbReference>
<evidence type="ECO:0000255" key="1">
    <source>
        <dbReference type="HAMAP-Rule" id="MF_01306"/>
    </source>
</evidence>
<evidence type="ECO:0000256" key="2">
    <source>
        <dbReference type="SAM" id="MobiDB-lite"/>
    </source>
</evidence>
<evidence type="ECO:0000305" key="3"/>
<sequence>MSRYRGPRLRVVRRLGELPGLSRKTPRRAYPPGQHGQGRRKRSEYAIRLEEKQKLLYNYGVTEKQLVRYMKKARRSTDSTGQKLLELLEMRLDNTVFRLGMAGTIPGARQLVNHGHVIVNGRVVNIASYQCRPGDVISVRNKDNSRRMVETNMQYPGLANLPDHLEFDKNTLTGKVNDVIKREWVALQINELLVVEYYSRKV</sequence>
<proteinExistence type="inferred from homology"/>
<name>RS4_CROS5</name>
<reference key="1">
    <citation type="journal article" date="2008" name="Proc. Natl. Acad. Sci. U.S.A.">
        <title>The genome of Cyanothece 51142, a unicellular diazotrophic cyanobacterium important in the marine nitrogen cycle.</title>
        <authorList>
            <person name="Welsh E.A."/>
            <person name="Liberton M."/>
            <person name="Stoeckel J."/>
            <person name="Loh T."/>
            <person name="Elvitigala T."/>
            <person name="Wang C."/>
            <person name="Wollam A."/>
            <person name="Fulton R.S."/>
            <person name="Clifton S.W."/>
            <person name="Jacobs J.M."/>
            <person name="Aurora R."/>
            <person name="Ghosh B.K."/>
            <person name="Sherman L.A."/>
            <person name="Smith R.D."/>
            <person name="Wilson R.K."/>
            <person name="Pakrasi H.B."/>
        </authorList>
    </citation>
    <scope>NUCLEOTIDE SEQUENCE [LARGE SCALE GENOMIC DNA]</scope>
    <source>
        <strain>ATCC 51142 / BH68</strain>
    </source>
</reference>
<feature type="chain" id="PRO_1000165396" description="Small ribosomal subunit protein uS4">
    <location>
        <begin position="1"/>
        <end position="202"/>
    </location>
</feature>
<feature type="domain" description="S4 RNA-binding" evidence="1">
    <location>
        <begin position="90"/>
        <end position="152"/>
    </location>
</feature>
<feature type="region of interest" description="Disordered" evidence="2">
    <location>
        <begin position="16"/>
        <end position="43"/>
    </location>
</feature>
<organism>
    <name type="scientific">Crocosphaera subtropica (strain ATCC 51142 / BH68)</name>
    <name type="common">Cyanothece sp. (strain ATCC 51142)</name>
    <dbReference type="NCBI Taxonomy" id="43989"/>
    <lineage>
        <taxon>Bacteria</taxon>
        <taxon>Bacillati</taxon>
        <taxon>Cyanobacteriota</taxon>
        <taxon>Cyanophyceae</taxon>
        <taxon>Oscillatoriophycideae</taxon>
        <taxon>Chroococcales</taxon>
        <taxon>Aphanothecaceae</taxon>
        <taxon>Crocosphaera</taxon>
        <taxon>Crocosphaera subtropica</taxon>
    </lineage>
</organism>
<keyword id="KW-1185">Reference proteome</keyword>
<keyword id="KW-0687">Ribonucleoprotein</keyword>
<keyword id="KW-0689">Ribosomal protein</keyword>
<keyword id="KW-0694">RNA-binding</keyword>
<keyword id="KW-0699">rRNA-binding</keyword>
<gene>
    <name evidence="1" type="primary">rpsD</name>
    <name evidence="1" type="synonym">rps4</name>
    <name type="ordered locus">cce_0217</name>
</gene>
<comment type="function">
    <text evidence="1">One of the primary rRNA binding proteins, it binds directly to 16S rRNA where it nucleates assembly of the body of the 30S subunit.</text>
</comment>
<comment type="function">
    <text evidence="1">With S5 and S12 plays an important role in translational accuracy.</text>
</comment>
<comment type="subunit">
    <text evidence="1">Part of the 30S ribosomal subunit. Contacts protein S5. The interaction surface between S4 and S5 is involved in control of translational fidelity.</text>
</comment>
<comment type="similarity">
    <text evidence="1">Belongs to the universal ribosomal protein uS4 family.</text>
</comment>
<protein>
    <recommendedName>
        <fullName evidence="1">Small ribosomal subunit protein uS4</fullName>
    </recommendedName>
    <alternativeName>
        <fullName evidence="3">30S ribosomal protein S4</fullName>
    </alternativeName>
</protein>
<accession>B1X067</accession>